<protein>
    <recommendedName>
        <fullName evidence="1">UPF0145 protein FTT_0954c</fullName>
    </recommendedName>
</protein>
<sequence>MILTTADTLGKREIIEYKGLVTGIIVRTPTITQGILGGLKNIIGGKNTSYTNVCKEARLHAEQEMINQAKELGANAIVAIRYDSSSLGGNTSGTEVFCYGTAVVVR</sequence>
<comment type="similarity">
    <text evidence="1">Belongs to the UPF0145 family.</text>
</comment>
<feature type="chain" id="PRO_0000225826" description="UPF0145 protein FTT_0954c">
    <location>
        <begin position="1"/>
        <end position="106"/>
    </location>
</feature>
<accession>Q5NG98</accession>
<gene>
    <name type="ordered locus">FTT_0954c</name>
</gene>
<evidence type="ECO:0000255" key="1">
    <source>
        <dbReference type="HAMAP-Rule" id="MF_00338"/>
    </source>
</evidence>
<organism>
    <name type="scientific">Francisella tularensis subsp. tularensis (strain SCHU S4 / Schu 4)</name>
    <dbReference type="NCBI Taxonomy" id="177416"/>
    <lineage>
        <taxon>Bacteria</taxon>
        <taxon>Pseudomonadati</taxon>
        <taxon>Pseudomonadota</taxon>
        <taxon>Gammaproteobacteria</taxon>
        <taxon>Thiotrichales</taxon>
        <taxon>Francisellaceae</taxon>
        <taxon>Francisella</taxon>
    </lineage>
</organism>
<dbReference type="EMBL" id="AJ749949">
    <property type="protein sequence ID" value="CAG45587.1"/>
    <property type="molecule type" value="Genomic_DNA"/>
</dbReference>
<dbReference type="RefSeq" id="WP_003016377.1">
    <property type="nucleotide sequence ID" value="NZ_CP010290.1"/>
</dbReference>
<dbReference type="RefSeq" id="YP_169944.1">
    <property type="nucleotide sequence ID" value="NC_006570.2"/>
</dbReference>
<dbReference type="SMR" id="Q5NG98"/>
<dbReference type="STRING" id="177416.FTT_0954c"/>
<dbReference type="DNASU" id="3192448"/>
<dbReference type="EnsemblBacteria" id="CAG45587">
    <property type="protein sequence ID" value="CAG45587"/>
    <property type="gene ID" value="FTT_0954c"/>
</dbReference>
<dbReference type="KEGG" id="ftu:FTT_0954c"/>
<dbReference type="eggNOG" id="COG0393">
    <property type="taxonomic scope" value="Bacteria"/>
</dbReference>
<dbReference type="OrthoDB" id="9796448at2"/>
<dbReference type="Proteomes" id="UP000001174">
    <property type="component" value="Chromosome"/>
</dbReference>
<dbReference type="Gene3D" id="3.30.110.70">
    <property type="entry name" value="Hypothetical protein apc22750. Chain B"/>
    <property type="match status" value="1"/>
</dbReference>
<dbReference type="HAMAP" id="MF_00338">
    <property type="entry name" value="UPF0145"/>
    <property type="match status" value="1"/>
</dbReference>
<dbReference type="InterPro" id="IPR035439">
    <property type="entry name" value="UPF0145_dom_sf"/>
</dbReference>
<dbReference type="InterPro" id="IPR002765">
    <property type="entry name" value="UPF0145_YbjQ-like"/>
</dbReference>
<dbReference type="PANTHER" id="PTHR34068">
    <property type="entry name" value="UPF0145 PROTEIN YBJQ"/>
    <property type="match status" value="1"/>
</dbReference>
<dbReference type="PANTHER" id="PTHR34068:SF1">
    <property type="entry name" value="UPF0145 PROTEIN YBJQ"/>
    <property type="match status" value="1"/>
</dbReference>
<dbReference type="Pfam" id="PF01906">
    <property type="entry name" value="YbjQ_1"/>
    <property type="match status" value="1"/>
</dbReference>
<dbReference type="SUPFAM" id="SSF117782">
    <property type="entry name" value="YbjQ-like"/>
    <property type="match status" value="1"/>
</dbReference>
<keyword id="KW-1185">Reference proteome</keyword>
<proteinExistence type="inferred from homology"/>
<name>Y954_FRATT</name>
<reference key="1">
    <citation type="journal article" date="2005" name="Nat. Genet.">
        <title>The complete genome sequence of Francisella tularensis, the causative agent of tularemia.</title>
        <authorList>
            <person name="Larsson P."/>
            <person name="Oyston P.C.F."/>
            <person name="Chain P."/>
            <person name="Chu M.C."/>
            <person name="Duffield M."/>
            <person name="Fuxelius H.-H."/>
            <person name="Garcia E."/>
            <person name="Haelltorp G."/>
            <person name="Johansson D."/>
            <person name="Isherwood K.E."/>
            <person name="Karp P.D."/>
            <person name="Larsson E."/>
            <person name="Liu Y."/>
            <person name="Michell S."/>
            <person name="Prior J."/>
            <person name="Prior R."/>
            <person name="Malfatti S."/>
            <person name="Sjoestedt A."/>
            <person name="Svensson K."/>
            <person name="Thompson N."/>
            <person name="Vergez L."/>
            <person name="Wagg J.K."/>
            <person name="Wren B.W."/>
            <person name="Lindler L.E."/>
            <person name="Andersson S.G.E."/>
            <person name="Forsman M."/>
            <person name="Titball R.W."/>
        </authorList>
    </citation>
    <scope>NUCLEOTIDE SEQUENCE [LARGE SCALE GENOMIC DNA]</scope>
    <source>
        <strain>SCHU S4 / Schu 4</strain>
    </source>
</reference>